<feature type="chain" id="PRO_0000363599" description="Probable protein S-acyltransferase 4">
    <location>
        <begin position="1"/>
        <end position="477"/>
    </location>
</feature>
<feature type="transmembrane region" description="Helical" evidence="2">
    <location>
        <begin position="32"/>
        <end position="52"/>
    </location>
</feature>
<feature type="transmembrane region" description="Helical" evidence="2">
    <location>
        <begin position="68"/>
        <end position="88"/>
    </location>
</feature>
<feature type="transmembrane region" description="Helical" evidence="2">
    <location>
        <begin position="190"/>
        <end position="210"/>
    </location>
</feature>
<feature type="transmembrane region" description="Helical" evidence="2">
    <location>
        <begin position="236"/>
        <end position="256"/>
    </location>
</feature>
<feature type="domain" description="DHHC" evidence="3">
    <location>
        <begin position="146"/>
        <end position="196"/>
    </location>
</feature>
<feature type="region of interest" description="Disordered" evidence="4">
    <location>
        <begin position="101"/>
        <end position="120"/>
    </location>
</feature>
<feature type="region of interest" description="Disordered" evidence="4">
    <location>
        <begin position="374"/>
        <end position="477"/>
    </location>
</feature>
<feature type="compositionally biased region" description="Basic residues" evidence="4">
    <location>
        <begin position="378"/>
        <end position="388"/>
    </location>
</feature>
<feature type="compositionally biased region" description="Polar residues" evidence="4">
    <location>
        <begin position="467"/>
        <end position="477"/>
    </location>
</feature>
<feature type="active site" description="S-palmitoyl cysteine intermediate" evidence="1">
    <location>
        <position position="176"/>
    </location>
</feature>
<feature type="sequence conflict" description="In Ref. 4; AAM20704." evidence="6" ref="4">
    <original>S</original>
    <variation>I</variation>
    <location>
        <position position="466"/>
    </location>
</feature>
<proteinExistence type="evidence at transcript level"/>
<organism>
    <name type="scientific">Arabidopsis thaliana</name>
    <name type="common">Mouse-ear cress</name>
    <dbReference type="NCBI Taxonomy" id="3702"/>
    <lineage>
        <taxon>Eukaryota</taxon>
        <taxon>Viridiplantae</taxon>
        <taxon>Streptophyta</taxon>
        <taxon>Embryophyta</taxon>
        <taxon>Tracheophyta</taxon>
        <taxon>Spermatophyta</taxon>
        <taxon>Magnoliopsida</taxon>
        <taxon>eudicotyledons</taxon>
        <taxon>Gunneridae</taxon>
        <taxon>Pentapetalae</taxon>
        <taxon>rosids</taxon>
        <taxon>malvids</taxon>
        <taxon>Brassicales</taxon>
        <taxon>Brassicaceae</taxon>
        <taxon>Camelineae</taxon>
        <taxon>Arabidopsis</taxon>
    </lineage>
</organism>
<protein>
    <recommendedName>
        <fullName>Probable protein S-acyltransferase 4</fullName>
        <ecNumber>2.3.1.225</ecNumber>
    </recommendedName>
    <alternativeName>
        <fullName>Probable palmitoyltransferase At3g56930</fullName>
    </alternativeName>
    <alternativeName>
        <fullName>Zinc finger DHHC domain-containing protein At3g56930</fullName>
    </alternativeName>
</protein>
<comment type="function">
    <text evidence="1 5">Palmitoyl acyltransferase.</text>
</comment>
<comment type="catalytic activity">
    <reaction>
        <text>L-cysteinyl-[protein] + hexadecanoyl-CoA = S-hexadecanoyl-L-cysteinyl-[protein] + CoA</text>
        <dbReference type="Rhea" id="RHEA:36683"/>
        <dbReference type="Rhea" id="RHEA-COMP:10131"/>
        <dbReference type="Rhea" id="RHEA-COMP:11032"/>
        <dbReference type="ChEBI" id="CHEBI:29950"/>
        <dbReference type="ChEBI" id="CHEBI:57287"/>
        <dbReference type="ChEBI" id="CHEBI:57379"/>
        <dbReference type="ChEBI" id="CHEBI:74151"/>
        <dbReference type="EC" id="2.3.1.225"/>
    </reaction>
</comment>
<comment type="subcellular location">
    <subcellularLocation>
        <location evidence="6">Cell membrane</location>
        <topology evidence="6">Multi-pass membrane protein</topology>
    </subcellularLocation>
</comment>
<comment type="alternative products">
    <event type="alternative splicing"/>
    <isoform>
        <id>Q9M1K5-1</id>
        <name>1</name>
        <sequence type="displayed"/>
    </isoform>
    <text>A number of isoforms are produced. According to EST sequences.</text>
</comment>
<comment type="domain">
    <text evidence="1">The DHHC domain is required for palmitoyltransferase activity.</text>
</comment>
<comment type="similarity">
    <text evidence="6">Belongs to the DHHC palmitoyltransferase family.</text>
</comment>
<sequence length="477" mass="54777">MAWNETKLKRLYQVWRGSNKFLCGGRLIFGPDASSLYLSTILILGPAVMFFVKMYTKMADPRTKNPNLCIPILCVSWILTILDIFFLLMTSSRDPGIVPRSFRPPETDDAPDSTTPSMEWVSGRTPNIRIPRVKDVTVNGHTVKVKFCDTCLLYRPPRASHCSICNNCVQRFDHHCPWVGQCIGVRNYRFFFMFISTSTTLCIYVFAFSWLNIFQRHMDEKISIWKAISKDVLSDILIVYCFITVWFVGGLTIFHSYLICTNQTTYENFRYRYDKKENPYNKGILGNIWEIFLSKIPPSMNKFRSFVKEEDYMMMMVETPTSNLGESLVSSKEKIDIEMGGGRIVDESGKSYSLPEILRNLNYEDLEDDCEEDDLKAKDHHHHHHHQHQHNEGIIPPFDPFFTNEIGSNKDERNGEESGGSSSDGENTGKRVRVSDEDEEKVEGYERNWSTDKGMNINAGSEDGASSPVSTSPMLRK</sequence>
<name>ZDH13_ARATH</name>
<reference key="1">
    <citation type="journal article" date="2000" name="Nature">
        <title>Sequence and analysis of chromosome 3 of the plant Arabidopsis thaliana.</title>
        <authorList>
            <person name="Salanoubat M."/>
            <person name="Lemcke K."/>
            <person name="Rieger M."/>
            <person name="Ansorge W."/>
            <person name="Unseld M."/>
            <person name="Fartmann B."/>
            <person name="Valle G."/>
            <person name="Bloecker H."/>
            <person name="Perez-Alonso M."/>
            <person name="Obermaier B."/>
            <person name="Delseny M."/>
            <person name="Boutry M."/>
            <person name="Grivell L.A."/>
            <person name="Mache R."/>
            <person name="Puigdomenech P."/>
            <person name="De Simone V."/>
            <person name="Choisne N."/>
            <person name="Artiguenave F."/>
            <person name="Robert C."/>
            <person name="Brottier P."/>
            <person name="Wincker P."/>
            <person name="Cattolico L."/>
            <person name="Weissenbach J."/>
            <person name="Saurin W."/>
            <person name="Quetier F."/>
            <person name="Schaefer M."/>
            <person name="Mueller-Auer S."/>
            <person name="Gabel C."/>
            <person name="Fuchs M."/>
            <person name="Benes V."/>
            <person name="Wurmbach E."/>
            <person name="Drzonek H."/>
            <person name="Erfle H."/>
            <person name="Jordan N."/>
            <person name="Bangert S."/>
            <person name="Wiedelmann R."/>
            <person name="Kranz H."/>
            <person name="Voss H."/>
            <person name="Holland R."/>
            <person name="Brandt P."/>
            <person name="Nyakatura G."/>
            <person name="Vezzi A."/>
            <person name="D'Angelo M."/>
            <person name="Pallavicini A."/>
            <person name="Toppo S."/>
            <person name="Simionati B."/>
            <person name="Conrad A."/>
            <person name="Hornischer K."/>
            <person name="Kauer G."/>
            <person name="Loehnert T.-H."/>
            <person name="Nordsiek G."/>
            <person name="Reichelt J."/>
            <person name="Scharfe M."/>
            <person name="Schoen O."/>
            <person name="Bargues M."/>
            <person name="Terol J."/>
            <person name="Climent J."/>
            <person name="Navarro P."/>
            <person name="Collado C."/>
            <person name="Perez-Perez A."/>
            <person name="Ottenwaelder B."/>
            <person name="Duchemin D."/>
            <person name="Cooke R."/>
            <person name="Laudie M."/>
            <person name="Berger-Llauro C."/>
            <person name="Purnelle B."/>
            <person name="Masuy D."/>
            <person name="de Haan M."/>
            <person name="Maarse A.C."/>
            <person name="Alcaraz J.-P."/>
            <person name="Cottet A."/>
            <person name="Casacuberta E."/>
            <person name="Monfort A."/>
            <person name="Argiriou A."/>
            <person name="Flores M."/>
            <person name="Liguori R."/>
            <person name="Vitale D."/>
            <person name="Mannhaupt G."/>
            <person name="Haase D."/>
            <person name="Schoof H."/>
            <person name="Rudd S."/>
            <person name="Zaccaria P."/>
            <person name="Mewes H.-W."/>
            <person name="Mayer K.F.X."/>
            <person name="Kaul S."/>
            <person name="Town C.D."/>
            <person name="Koo H.L."/>
            <person name="Tallon L.J."/>
            <person name="Jenkins J."/>
            <person name="Rooney T."/>
            <person name="Rizzo M."/>
            <person name="Walts A."/>
            <person name="Utterback T."/>
            <person name="Fujii C.Y."/>
            <person name="Shea T.P."/>
            <person name="Creasy T.H."/>
            <person name="Haas B."/>
            <person name="Maiti R."/>
            <person name="Wu D."/>
            <person name="Peterson J."/>
            <person name="Van Aken S."/>
            <person name="Pai G."/>
            <person name="Militscher J."/>
            <person name="Sellers P."/>
            <person name="Gill J.E."/>
            <person name="Feldblyum T.V."/>
            <person name="Preuss D."/>
            <person name="Lin X."/>
            <person name="Nierman W.C."/>
            <person name="Salzberg S.L."/>
            <person name="White O."/>
            <person name="Venter J.C."/>
            <person name="Fraser C.M."/>
            <person name="Kaneko T."/>
            <person name="Nakamura Y."/>
            <person name="Sato S."/>
            <person name="Kato T."/>
            <person name="Asamizu E."/>
            <person name="Sasamoto S."/>
            <person name="Kimura T."/>
            <person name="Idesawa K."/>
            <person name="Kawashima K."/>
            <person name="Kishida Y."/>
            <person name="Kiyokawa C."/>
            <person name="Kohara M."/>
            <person name="Matsumoto M."/>
            <person name="Matsuno A."/>
            <person name="Muraki A."/>
            <person name="Nakayama S."/>
            <person name="Nakazaki N."/>
            <person name="Shinpo S."/>
            <person name="Takeuchi C."/>
            <person name="Wada T."/>
            <person name="Watanabe A."/>
            <person name="Yamada M."/>
            <person name="Yasuda M."/>
            <person name="Tabata S."/>
        </authorList>
    </citation>
    <scope>NUCLEOTIDE SEQUENCE [LARGE SCALE GENOMIC DNA]</scope>
    <source>
        <strain>cv. Columbia</strain>
    </source>
</reference>
<reference key="2">
    <citation type="journal article" date="2017" name="Plant J.">
        <title>Araport11: a complete reannotation of the Arabidopsis thaliana reference genome.</title>
        <authorList>
            <person name="Cheng C.Y."/>
            <person name="Krishnakumar V."/>
            <person name="Chan A.P."/>
            <person name="Thibaud-Nissen F."/>
            <person name="Schobel S."/>
            <person name="Town C.D."/>
        </authorList>
    </citation>
    <scope>GENOME REANNOTATION</scope>
    <source>
        <strain>cv. Columbia</strain>
    </source>
</reference>
<reference key="3">
    <citation type="journal article" date="2002" name="Science">
        <title>Functional annotation of a full-length Arabidopsis cDNA collection.</title>
        <authorList>
            <person name="Seki M."/>
            <person name="Narusaka M."/>
            <person name="Kamiya A."/>
            <person name="Ishida J."/>
            <person name="Satou M."/>
            <person name="Sakurai T."/>
            <person name="Nakajima M."/>
            <person name="Enju A."/>
            <person name="Akiyama K."/>
            <person name="Oono Y."/>
            <person name="Muramatsu M."/>
            <person name="Hayashizaki Y."/>
            <person name="Kawai J."/>
            <person name="Carninci P."/>
            <person name="Itoh M."/>
            <person name="Ishii Y."/>
            <person name="Arakawa T."/>
            <person name="Shibata K."/>
            <person name="Shinagawa A."/>
            <person name="Shinozaki K."/>
        </authorList>
    </citation>
    <scope>NUCLEOTIDE SEQUENCE [LARGE SCALE MRNA]</scope>
    <source>
        <strain>cv. Columbia</strain>
    </source>
</reference>
<reference key="4">
    <citation type="journal article" date="2003" name="Science">
        <title>Empirical analysis of transcriptional activity in the Arabidopsis genome.</title>
        <authorList>
            <person name="Yamada K."/>
            <person name="Lim J."/>
            <person name="Dale J.M."/>
            <person name="Chen H."/>
            <person name="Shinn P."/>
            <person name="Palm C.J."/>
            <person name="Southwick A.M."/>
            <person name="Wu H.C."/>
            <person name="Kim C.J."/>
            <person name="Nguyen M."/>
            <person name="Pham P.K."/>
            <person name="Cheuk R.F."/>
            <person name="Karlin-Newmann G."/>
            <person name="Liu S.X."/>
            <person name="Lam B."/>
            <person name="Sakano H."/>
            <person name="Wu T."/>
            <person name="Yu G."/>
            <person name="Miranda M."/>
            <person name="Quach H.L."/>
            <person name="Tripp M."/>
            <person name="Chang C.H."/>
            <person name="Lee J.M."/>
            <person name="Toriumi M.J."/>
            <person name="Chan M.M."/>
            <person name="Tang C.C."/>
            <person name="Onodera C.S."/>
            <person name="Deng J.M."/>
            <person name="Akiyama K."/>
            <person name="Ansari Y."/>
            <person name="Arakawa T."/>
            <person name="Banh J."/>
            <person name="Banno F."/>
            <person name="Bowser L."/>
            <person name="Brooks S.Y."/>
            <person name="Carninci P."/>
            <person name="Chao Q."/>
            <person name="Choy N."/>
            <person name="Enju A."/>
            <person name="Goldsmith A.D."/>
            <person name="Gurjal M."/>
            <person name="Hansen N.F."/>
            <person name="Hayashizaki Y."/>
            <person name="Johnson-Hopson C."/>
            <person name="Hsuan V.W."/>
            <person name="Iida K."/>
            <person name="Karnes M."/>
            <person name="Khan S."/>
            <person name="Koesema E."/>
            <person name="Ishida J."/>
            <person name="Jiang P.X."/>
            <person name="Jones T."/>
            <person name="Kawai J."/>
            <person name="Kamiya A."/>
            <person name="Meyers C."/>
            <person name="Nakajima M."/>
            <person name="Narusaka M."/>
            <person name="Seki M."/>
            <person name="Sakurai T."/>
            <person name="Satou M."/>
            <person name="Tamse R."/>
            <person name="Vaysberg M."/>
            <person name="Wallender E.K."/>
            <person name="Wong C."/>
            <person name="Yamamura Y."/>
            <person name="Yuan S."/>
            <person name="Shinozaki K."/>
            <person name="Davis R.W."/>
            <person name="Theologis A."/>
            <person name="Ecker J.R."/>
        </authorList>
    </citation>
    <scope>NUCLEOTIDE SEQUENCE [LARGE SCALE MRNA]</scope>
    <source>
        <strain>cv. Columbia</strain>
    </source>
</reference>
<reference key="5">
    <citation type="book" date="2007" name="Proceedings of the 18th international conference on Arabidopsis research">
        <title>S-acylation: dynamic control of plant development and sigalling by lipid modification of proteins.</title>
        <authorList>
            <person name="Hemsley P.A."/>
            <person name="Taylor L."/>
            <person name="Grierson C.S."/>
        </authorList>
    </citation>
    <scope>GENE FAMILY</scope>
    <scope>FUNCTION</scope>
</reference>
<reference key="6">
    <citation type="journal article" date="2012" name="Plant Physiol.">
        <title>Genomics and localization of the Arabidopsis DHHC-cysteine-rich domain S-acyltransferase protein family.</title>
        <authorList>
            <person name="Batistic O."/>
        </authorList>
    </citation>
    <scope>SUBCELLULAR LOCATION</scope>
    <scope>GENE FAMILY</scope>
    <scope>NOMENCLATURE</scope>
</reference>
<dbReference type="EC" id="2.3.1.225"/>
<dbReference type="EMBL" id="AL138655">
    <property type="protein sequence ID" value="CAB72163.1"/>
    <property type="molecule type" value="Genomic_DNA"/>
</dbReference>
<dbReference type="EMBL" id="CP002686">
    <property type="protein sequence ID" value="AEE79587.1"/>
    <property type="molecule type" value="Genomic_DNA"/>
</dbReference>
<dbReference type="EMBL" id="AK117663">
    <property type="protein sequence ID" value="BAC42316.1"/>
    <property type="molecule type" value="mRNA"/>
</dbReference>
<dbReference type="EMBL" id="AY099853">
    <property type="protein sequence ID" value="AAM20704.1"/>
    <property type="molecule type" value="mRNA"/>
</dbReference>
<dbReference type="EMBL" id="BT008533">
    <property type="protein sequence ID" value="AAP40360.1"/>
    <property type="molecule type" value="mRNA"/>
</dbReference>
<dbReference type="PIR" id="T47753">
    <property type="entry name" value="T47753"/>
</dbReference>
<dbReference type="RefSeq" id="NP_191252.1">
    <molecule id="Q9M1K5-1"/>
    <property type="nucleotide sequence ID" value="NM_115552.4"/>
</dbReference>
<dbReference type="SMR" id="Q9M1K5"/>
<dbReference type="FunCoup" id="Q9M1K5">
    <property type="interactions" value="2444"/>
</dbReference>
<dbReference type="STRING" id="3702.Q9M1K5"/>
<dbReference type="iPTMnet" id="Q9M1K5"/>
<dbReference type="PaxDb" id="3702-AT3G56930.1"/>
<dbReference type="ProteomicsDB" id="232343">
    <molecule id="Q9M1K5-1"/>
</dbReference>
<dbReference type="EnsemblPlants" id="AT3G56930.1">
    <molecule id="Q9M1K5-1"/>
    <property type="protein sequence ID" value="AT3G56930.1"/>
    <property type="gene ID" value="AT3G56930"/>
</dbReference>
<dbReference type="GeneID" id="824860"/>
<dbReference type="Gramene" id="AT3G56930.1">
    <molecule id="Q9M1K5-1"/>
    <property type="protein sequence ID" value="AT3G56930.1"/>
    <property type="gene ID" value="AT3G56930"/>
</dbReference>
<dbReference type="KEGG" id="ath:AT3G56930"/>
<dbReference type="Araport" id="AT3G56930"/>
<dbReference type="TAIR" id="AT3G56930">
    <property type="gene designation" value="PAT4"/>
</dbReference>
<dbReference type="eggNOG" id="KOG1311">
    <property type="taxonomic scope" value="Eukaryota"/>
</dbReference>
<dbReference type="HOGENOM" id="CLU_018741_7_2_1"/>
<dbReference type="InParanoid" id="Q9M1K5"/>
<dbReference type="OMA" id="YEQKWSM"/>
<dbReference type="OrthoDB" id="4096362at2759"/>
<dbReference type="PhylomeDB" id="Q9M1K5"/>
<dbReference type="BRENDA" id="2.3.1.225">
    <property type="organism ID" value="399"/>
</dbReference>
<dbReference type="PRO" id="PR:Q9M1K5"/>
<dbReference type="Proteomes" id="UP000006548">
    <property type="component" value="Chromosome 3"/>
</dbReference>
<dbReference type="ExpressionAtlas" id="Q9M1K5">
    <property type="expression patterns" value="baseline and differential"/>
</dbReference>
<dbReference type="GO" id="GO:0005886">
    <property type="term" value="C:plasma membrane"/>
    <property type="evidence" value="ECO:0000314"/>
    <property type="project" value="TAIR"/>
</dbReference>
<dbReference type="GO" id="GO:0035618">
    <property type="term" value="C:root hair"/>
    <property type="evidence" value="ECO:0000314"/>
    <property type="project" value="TAIR"/>
</dbReference>
<dbReference type="GO" id="GO:0030140">
    <property type="term" value="C:trans-Golgi network transport vesicle"/>
    <property type="evidence" value="ECO:0000314"/>
    <property type="project" value="TAIR"/>
</dbReference>
<dbReference type="GO" id="GO:0019706">
    <property type="term" value="F:protein-cysteine S-palmitoyltransferase activity"/>
    <property type="evidence" value="ECO:0007669"/>
    <property type="project" value="UniProtKB-EC"/>
</dbReference>
<dbReference type="GO" id="GO:0048767">
    <property type="term" value="P:root hair elongation"/>
    <property type="evidence" value="ECO:0000315"/>
    <property type="project" value="TAIR"/>
</dbReference>
<dbReference type="InterPro" id="IPR001594">
    <property type="entry name" value="Palmitoyltrfase_DHHC"/>
</dbReference>
<dbReference type="InterPro" id="IPR039859">
    <property type="entry name" value="PFA4/ZDH16/20/ERF2-like"/>
</dbReference>
<dbReference type="PANTHER" id="PTHR22883:SF391">
    <property type="entry name" value="PROTEIN S-ACYLTRANSFERASE 3-RELATED"/>
    <property type="match status" value="1"/>
</dbReference>
<dbReference type="PANTHER" id="PTHR22883">
    <property type="entry name" value="ZINC FINGER DHHC DOMAIN CONTAINING PROTEIN"/>
    <property type="match status" value="1"/>
</dbReference>
<dbReference type="Pfam" id="PF01529">
    <property type="entry name" value="DHHC"/>
    <property type="match status" value="1"/>
</dbReference>
<dbReference type="PROSITE" id="PS50216">
    <property type="entry name" value="DHHC"/>
    <property type="match status" value="1"/>
</dbReference>
<keyword id="KW-0012">Acyltransferase</keyword>
<keyword id="KW-0025">Alternative splicing</keyword>
<keyword id="KW-1003">Cell membrane</keyword>
<keyword id="KW-0449">Lipoprotein</keyword>
<keyword id="KW-0472">Membrane</keyword>
<keyword id="KW-0564">Palmitate</keyword>
<keyword id="KW-1185">Reference proteome</keyword>
<keyword id="KW-0808">Transferase</keyword>
<keyword id="KW-0812">Transmembrane</keyword>
<keyword id="KW-1133">Transmembrane helix</keyword>
<evidence type="ECO:0000250" key="1"/>
<evidence type="ECO:0000255" key="2"/>
<evidence type="ECO:0000255" key="3">
    <source>
        <dbReference type="PROSITE-ProRule" id="PRU00067"/>
    </source>
</evidence>
<evidence type="ECO:0000256" key="4">
    <source>
        <dbReference type="SAM" id="MobiDB-lite"/>
    </source>
</evidence>
<evidence type="ECO:0000269" key="5">
    <source ref="5"/>
</evidence>
<evidence type="ECO:0000305" key="6"/>
<gene>
    <name type="primary">PAT04</name>
    <name type="ordered locus">At3g56930</name>
    <name type="ORF">F24I3.10</name>
</gene>
<accession>Q9M1K5</accession>
<accession>Q8L5Y7</accession>